<comment type="function">
    <text evidence="1">Catalyzes the phosphorylation of D-fructose 6-phosphate to fructose 1,6-bisphosphate by ATP, the first committing step of glycolysis.</text>
</comment>
<comment type="catalytic activity">
    <reaction evidence="1">
        <text>beta-D-fructose 6-phosphate + ATP = beta-D-fructose 1,6-bisphosphate + ADP + H(+)</text>
        <dbReference type="Rhea" id="RHEA:16109"/>
        <dbReference type="ChEBI" id="CHEBI:15378"/>
        <dbReference type="ChEBI" id="CHEBI:30616"/>
        <dbReference type="ChEBI" id="CHEBI:32966"/>
        <dbReference type="ChEBI" id="CHEBI:57634"/>
        <dbReference type="ChEBI" id="CHEBI:456216"/>
        <dbReference type="EC" id="2.7.1.11"/>
    </reaction>
</comment>
<comment type="cofactor">
    <cofactor evidence="1">
        <name>Mg(2+)</name>
        <dbReference type="ChEBI" id="CHEBI:18420"/>
    </cofactor>
</comment>
<comment type="activity regulation">
    <text evidence="1">Allosterically activated by ADP and other diphosphonucleosides, and allosterically inhibited by phosphoenolpyruvate.</text>
</comment>
<comment type="pathway">
    <text evidence="1">Carbohydrate degradation; glycolysis; D-glyceraldehyde 3-phosphate and glycerone phosphate from D-glucose: step 3/4.</text>
</comment>
<comment type="subunit">
    <text evidence="1">Homotetramer.</text>
</comment>
<comment type="subcellular location">
    <subcellularLocation>
        <location evidence="1">Cytoplasm</location>
    </subcellularLocation>
</comment>
<comment type="similarity">
    <text evidence="1">Belongs to the phosphofructokinase type A (PFKA) family. ATP-dependent PFK group I subfamily. Prokaryotic clade 'B1' sub-subfamily.</text>
</comment>
<sequence length="322" mass="34248">MKRIGIMTSGGDAPGMNLAIRAVARKALSSGLEAYGINYGFAGLVAGDIHEFKAADLDDMVSQGGTMLYSARYPEFAQEESQLKGIEQLKKFGIDALVVIGGDGSYHGALRLTEHGYNTIGLPGTIDNDIPFTDFTIGFDTALNTAVDAIDKIRDTAKSHQRVFAVQVMGRNAADIALWAGVASGADAVIAPGFDYDVEAIANKLKKNRANGKDYGIIVIAEGDANSDAAPEFIDQLKQYGDFDARATVIGHVQRGGVPSAKDRVLASKMGAYAVELLLEGKGGLAVGILENKVQAHNMLDLFDAKHQADDSLYQLSEDLSF</sequence>
<organism>
    <name type="scientific">Pediococcus pentosaceus (strain ATCC 25745 / CCUG 21536 / LMG 10740 / 183-1w)</name>
    <dbReference type="NCBI Taxonomy" id="278197"/>
    <lineage>
        <taxon>Bacteria</taxon>
        <taxon>Bacillati</taxon>
        <taxon>Bacillota</taxon>
        <taxon>Bacilli</taxon>
        <taxon>Lactobacillales</taxon>
        <taxon>Lactobacillaceae</taxon>
        <taxon>Pediococcus</taxon>
    </lineage>
</organism>
<proteinExistence type="inferred from homology"/>
<gene>
    <name evidence="1" type="primary">pfkA</name>
    <name type="ordered locus">PEPE_1093</name>
</gene>
<feature type="chain" id="PRO_1000059783" description="ATP-dependent 6-phosphofructokinase">
    <location>
        <begin position="1"/>
        <end position="322"/>
    </location>
</feature>
<feature type="active site" description="Proton acceptor" evidence="1">
    <location>
        <position position="127"/>
    </location>
</feature>
<feature type="binding site" evidence="1">
    <location>
        <position position="11"/>
    </location>
    <ligand>
        <name>ATP</name>
        <dbReference type="ChEBI" id="CHEBI:30616"/>
    </ligand>
</feature>
<feature type="binding site" evidence="1">
    <location>
        <begin position="21"/>
        <end position="25"/>
    </location>
    <ligand>
        <name>ADP</name>
        <dbReference type="ChEBI" id="CHEBI:456216"/>
        <note>allosteric activator; ligand shared between dimeric partners</note>
    </ligand>
</feature>
<feature type="binding site" evidence="1">
    <location>
        <begin position="72"/>
        <end position="73"/>
    </location>
    <ligand>
        <name>ATP</name>
        <dbReference type="ChEBI" id="CHEBI:30616"/>
    </ligand>
</feature>
<feature type="binding site" evidence="1">
    <location>
        <begin position="102"/>
        <end position="105"/>
    </location>
    <ligand>
        <name>ATP</name>
        <dbReference type="ChEBI" id="CHEBI:30616"/>
    </ligand>
</feature>
<feature type="binding site" evidence="1">
    <location>
        <position position="103"/>
    </location>
    <ligand>
        <name>Mg(2+)</name>
        <dbReference type="ChEBI" id="CHEBI:18420"/>
        <note>catalytic</note>
    </ligand>
</feature>
<feature type="binding site" description="in other chain" evidence="1">
    <location>
        <begin position="125"/>
        <end position="127"/>
    </location>
    <ligand>
        <name>substrate</name>
        <note>ligand shared between dimeric partners</note>
    </ligand>
</feature>
<feature type="binding site" description="in other chain" evidence="1">
    <location>
        <position position="154"/>
    </location>
    <ligand>
        <name>ADP</name>
        <dbReference type="ChEBI" id="CHEBI:456216"/>
        <note>allosteric activator; ligand shared between dimeric partners</note>
    </ligand>
</feature>
<feature type="binding site" evidence="1">
    <location>
        <position position="162"/>
    </location>
    <ligand>
        <name>substrate</name>
        <note>ligand shared between dimeric partners</note>
    </ligand>
</feature>
<feature type="binding site" description="in other chain" evidence="1">
    <location>
        <begin position="169"/>
        <end position="171"/>
    </location>
    <ligand>
        <name>substrate</name>
        <note>ligand shared between dimeric partners</note>
    </ligand>
</feature>
<feature type="binding site" description="in other chain" evidence="1">
    <location>
        <begin position="185"/>
        <end position="187"/>
    </location>
    <ligand>
        <name>ADP</name>
        <dbReference type="ChEBI" id="CHEBI:456216"/>
        <note>allosteric activator; ligand shared between dimeric partners</note>
    </ligand>
</feature>
<feature type="binding site" description="in other chain" evidence="1">
    <location>
        <begin position="213"/>
        <end position="215"/>
    </location>
    <ligand>
        <name>ADP</name>
        <dbReference type="ChEBI" id="CHEBI:456216"/>
        <note>allosteric activator; ligand shared between dimeric partners</note>
    </ligand>
</feature>
<feature type="binding site" description="in other chain" evidence="1">
    <location>
        <position position="222"/>
    </location>
    <ligand>
        <name>substrate</name>
        <note>ligand shared between dimeric partners</note>
    </ligand>
</feature>
<feature type="binding site" evidence="1">
    <location>
        <position position="246"/>
    </location>
    <ligand>
        <name>substrate</name>
        <note>ligand shared between dimeric partners</note>
    </ligand>
</feature>
<feature type="binding site" description="in other chain" evidence="1">
    <location>
        <begin position="252"/>
        <end position="255"/>
    </location>
    <ligand>
        <name>substrate</name>
        <note>ligand shared between dimeric partners</note>
    </ligand>
</feature>
<evidence type="ECO:0000255" key="1">
    <source>
        <dbReference type="HAMAP-Rule" id="MF_00339"/>
    </source>
</evidence>
<keyword id="KW-0021">Allosteric enzyme</keyword>
<keyword id="KW-0067">ATP-binding</keyword>
<keyword id="KW-0963">Cytoplasm</keyword>
<keyword id="KW-0324">Glycolysis</keyword>
<keyword id="KW-0418">Kinase</keyword>
<keyword id="KW-0460">Magnesium</keyword>
<keyword id="KW-0479">Metal-binding</keyword>
<keyword id="KW-0547">Nucleotide-binding</keyword>
<keyword id="KW-0808">Transferase</keyword>
<accession>Q03F74</accession>
<name>PFKA_PEDPA</name>
<reference key="1">
    <citation type="journal article" date="2006" name="Proc. Natl. Acad. Sci. U.S.A.">
        <title>Comparative genomics of the lactic acid bacteria.</title>
        <authorList>
            <person name="Makarova K.S."/>
            <person name="Slesarev A."/>
            <person name="Wolf Y.I."/>
            <person name="Sorokin A."/>
            <person name="Mirkin B."/>
            <person name="Koonin E.V."/>
            <person name="Pavlov A."/>
            <person name="Pavlova N."/>
            <person name="Karamychev V."/>
            <person name="Polouchine N."/>
            <person name="Shakhova V."/>
            <person name="Grigoriev I."/>
            <person name="Lou Y."/>
            <person name="Rohksar D."/>
            <person name="Lucas S."/>
            <person name="Huang K."/>
            <person name="Goodstein D.M."/>
            <person name="Hawkins T."/>
            <person name="Plengvidhya V."/>
            <person name="Welker D."/>
            <person name="Hughes J."/>
            <person name="Goh Y."/>
            <person name="Benson A."/>
            <person name="Baldwin K."/>
            <person name="Lee J.-H."/>
            <person name="Diaz-Muniz I."/>
            <person name="Dosti B."/>
            <person name="Smeianov V."/>
            <person name="Wechter W."/>
            <person name="Barabote R."/>
            <person name="Lorca G."/>
            <person name="Altermann E."/>
            <person name="Barrangou R."/>
            <person name="Ganesan B."/>
            <person name="Xie Y."/>
            <person name="Rawsthorne H."/>
            <person name="Tamir D."/>
            <person name="Parker C."/>
            <person name="Breidt F."/>
            <person name="Broadbent J.R."/>
            <person name="Hutkins R."/>
            <person name="O'Sullivan D."/>
            <person name="Steele J."/>
            <person name="Unlu G."/>
            <person name="Saier M.H. Jr."/>
            <person name="Klaenhammer T."/>
            <person name="Richardson P."/>
            <person name="Kozyavkin S."/>
            <person name="Weimer B.C."/>
            <person name="Mills D.A."/>
        </authorList>
    </citation>
    <scope>NUCLEOTIDE SEQUENCE [LARGE SCALE GENOMIC DNA]</scope>
    <source>
        <strain>ATCC 25745 / CCUG 21536 / LMG 10740 / 183-1w</strain>
    </source>
</reference>
<protein>
    <recommendedName>
        <fullName evidence="1">ATP-dependent 6-phosphofructokinase</fullName>
        <shortName evidence="1">ATP-PFK</shortName>
        <shortName evidence="1">Phosphofructokinase</shortName>
        <ecNumber evidence="1">2.7.1.11</ecNumber>
    </recommendedName>
    <alternativeName>
        <fullName evidence="1">Phosphohexokinase</fullName>
    </alternativeName>
</protein>
<dbReference type="EC" id="2.7.1.11" evidence="1"/>
<dbReference type="EMBL" id="CP000422">
    <property type="protein sequence ID" value="ABJ68148.1"/>
    <property type="molecule type" value="Genomic_DNA"/>
</dbReference>
<dbReference type="RefSeq" id="WP_002833399.1">
    <property type="nucleotide sequence ID" value="NC_008525.1"/>
</dbReference>
<dbReference type="SMR" id="Q03F74"/>
<dbReference type="STRING" id="278197.PEPE_1093"/>
<dbReference type="GeneID" id="33062786"/>
<dbReference type="KEGG" id="ppe:PEPE_1093"/>
<dbReference type="eggNOG" id="COG0205">
    <property type="taxonomic scope" value="Bacteria"/>
</dbReference>
<dbReference type="HOGENOM" id="CLU_020655_0_1_9"/>
<dbReference type="OrthoDB" id="9802503at2"/>
<dbReference type="UniPathway" id="UPA00109">
    <property type="reaction ID" value="UER00182"/>
</dbReference>
<dbReference type="Proteomes" id="UP000000773">
    <property type="component" value="Chromosome"/>
</dbReference>
<dbReference type="GO" id="GO:0005945">
    <property type="term" value="C:6-phosphofructokinase complex"/>
    <property type="evidence" value="ECO:0007669"/>
    <property type="project" value="TreeGrafter"/>
</dbReference>
<dbReference type="GO" id="GO:0003872">
    <property type="term" value="F:6-phosphofructokinase activity"/>
    <property type="evidence" value="ECO:0007669"/>
    <property type="project" value="UniProtKB-UniRule"/>
</dbReference>
<dbReference type="GO" id="GO:0016208">
    <property type="term" value="F:AMP binding"/>
    <property type="evidence" value="ECO:0007669"/>
    <property type="project" value="TreeGrafter"/>
</dbReference>
<dbReference type="GO" id="GO:0005524">
    <property type="term" value="F:ATP binding"/>
    <property type="evidence" value="ECO:0007669"/>
    <property type="project" value="UniProtKB-KW"/>
</dbReference>
<dbReference type="GO" id="GO:0070095">
    <property type="term" value="F:fructose-6-phosphate binding"/>
    <property type="evidence" value="ECO:0007669"/>
    <property type="project" value="TreeGrafter"/>
</dbReference>
<dbReference type="GO" id="GO:0042802">
    <property type="term" value="F:identical protein binding"/>
    <property type="evidence" value="ECO:0007669"/>
    <property type="project" value="TreeGrafter"/>
</dbReference>
<dbReference type="GO" id="GO:0046872">
    <property type="term" value="F:metal ion binding"/>
    <property type="evidence" value="ECO:0007669"/>
    <property type="project" value="UniProtKB-KW"/>
</dbReference>
<dbReference type="GO" id="GO:0048029">
    <property type="term" value="F:monosaccharide binding"/>
    <property type="evidence" value="ECO:0007669"/>
    <property type="project" value="TreeGrafter"/>
</dbReference>
<dbReference type="GO" id="GO:0061621">
    <property type="term" value="P:canonical glycolysis"/>
    <property type="evidence" value="ECO:0007669"/>
    <property type="project" value="TreeGrafter"/>
</dbReference>
<dbReference type="GO" id="GO:0030388">
    <property type="term" value="P:fructose 1,6-bisphosphate metabolic process"/>
    <property type="evidence" value="ECO:0007669"/>
    <property type="project" value="TreeGrafter"/>
</dbReference>
<dbReference type="GO" id="GO:0006002">
    <property type="term" value="P:fructose 6-phosphate metabolic process"/>
    <property type="evidence" value="ECO:0007669"/>
    <property type="project" value="InterPro"/>
</dbReference>
<dbReference type="FunFam" id="3.40.50.450:FF:000001">
    <property type="entry name" value="ATP-dependent 6-phosphofructokinase"/>
    <property type="match status" value="1"/>
</dbReference>
<dbReference type="FunFam" id="3.40.50.460:FF:000002">
    <property type="entry name" value="ATP-dependent 6-phosphofructokinase"/>
    <property type="match status" value="1"/>
</dbReference>
<dbReference type="Gene3D" id="3.40.50.450">
    <property type="match status" value="1"/>
</dbReference>
<dbReference type="Gene3D" id="3.40.50.460">
    <property type="entry name" value="Phosphofructokinase domain"/>
    <property type="match status" value="1"/>
</dbReference>
<dbReference type="HAMAP" id="MF_00339">
    <property type="entry name" value="Phosphofructokinase_I_B1"/>
    <property type="match status" value="1"/>
</dbReference>
<dbReference type="InterPro" id="IPR022953">
    <property type="entry name" value="ATP_PFK"/>
</dbReference>
<dbReference type="InterPro" id="IPR012003">
    <property type="entry name" value="ATP_PFK_prok-type"/>
</dbReference>
<dbReference type="InterPro" id="IPR012828">
    <property type="entry name" value="PFKA_ATP_prok"/>
</dbReference>
<dbReference type="InterPro" id="IPR015912">
    <property type="entry name" value="Phosphofructokinase_CS"/>
</dbReference>
<dbReference type="InterPro" id="IPR000023">
    <property type="entry name" value="Phosphofructokinase_dom"/>
</dbReference>
<dbReference type="InterPro" id="IPR035966">
    <property type="entry name" value="PKF_sf"/>
</dbReference>
<dbReference type="NCBIfam" id="TIGR02482">
    <property type="entry name" value="PFKA_ATP"/>
    <property type="match status" value="1"/>
</dbReference>
<dbReference type="NCBIfam" id="NF002872">
    <property type="entry name" value="PRK03202.1"/>
    <property type="match status" value="1"/>
</dbReference>
<dbReference type="PANTHER" id="PTHR13697:SF4">
    <property type="entry name" value="ATP-DEPENDENT 6-PHOSPHOFRUCTOKINASE"/>
    <property type="match status" value="1"/>
</dbReference>
<dbReference type="PANTHER" id="PTHR13697">
    <property type="entry name" value="PHOSPHOFRUCTOKINASE"/>
    <property type="match status" value="1"/>
</dbReference>
<dbReference type="Pfam" id="PF00365">
    <property type="entry name" value="PFK"/>
    <property type="match status" value="1"/>
</dbReference>
<dbReference type="PIRSF" id="PIRSF000532">
    <property type="entry name" value="ATP_PFK_prok"/>
    <property type="match status" value="1"/>
</dbReference>
<dbReference type="PRINTS" id="PR00476">
    <property type="entry name" value="PHFRCTKINASE"/>
</dbReference>
<dbReference type="SUPFAM" id="SSF53784">
    <property type="entry name" value="Phosphofructokinase"/>
    <property type="match status" value="1"/>
</dbReference>
<dbReference type="PROSITE" id="PS00433">
    <property type="entry name" value="PHOSPHOFRUCTOKINASE"/>
    <property type="match status" value="1"/>
</dbReference>